<dbReference type="EMBL" id="AE017262">
    <property type="protein sequence ID" value="AAT05382.1"/>
    <property type="molecule type" value="Genomic_DNA"/>
</dbReference>
<dbReference type="RefSeq" id="WP_003726304.1">
    <property type="nucleotide sequence ID" value="NC_002973.6"/>
</dbReference>
<dbReference type="SMR" id="Q71WD4"/>
<dbReference type="KEGG" id="lmf:LMOf2365_2617"/>
<dbReference type="HOGENOM" id="CLU_089975_0_0_9"/>
<dbReference type="GO" id="GO:0097367">
    <property type="term" value="F:carbohydrate derivative binding"/>
    <property type="evidence" value="ECO:0007669"/>
    <property type="project" value="InterPro"/>
</dbReference>
<dbReference type="GO" id="GO:1901135">
    <property type="term" value="P:carbohydrate derivative metabolic process"/>
    <property type="evidence" value="ECO:0007669"/>
    <property type="project" value="InterPro"/>
</dbReference>
<dbReference type="CDD" id="cd05013">
    <property type="entry name" value="SIS_RpiR"/>
    <property type="match status" value="1"/>
</dbReference>
<dbReference type="Gene3D" id="3.40.50.10490">
    <property type="entry name" value="Glucose-6-phosphate isomerase like protein, domain 1"/>
    <property type="match status" value="1"/>
</dbReference>
<dbReference type="HAMAP" id="MF_01240">
    <property type="entry name" value="UPF0309"/>
    <property type="match status" value="1"/>
</dbReference>
<dbReference type="InterPro" id="IPR035472">
    <property type="entry name" value="RpiR-like_SIS"/>
</dbReference>
<dbReference type="InterPro" id="IPR001347">
    <property type="entry name" value="SIS_dom"/>
</dbReference>
<dbReference type="InterPro" id="IPR046348">
    <property type="entry name" value="SIS_dom_sf"/>
</dbReference>
<dbReference type="InterPro" id="IPR050099">
    <property type="entry name" value="SIS_GmhA/DiaA_subfam"/>
</dbReference>
<dbReference type="InterPro" id="IPR022951">
    <property type="entry name" value="UPF0309"/>
</dbReference>
<dbReference type="NCBIfam" id="NF002805">
    <property type="entry name" value="PRK02947.1"/>
    <property type="match status" value="1"/>
</dbReference>
<dbReference type="PANTHER" id="PTHR30390:SF7">
    <property type="entry name" value="PHOSPHOHEPTOSE ISOMERASE"/>
    <property type="match status" value="1"/>
</dbReference>
<dbReference type="PANTHER" id="PTHR30390">
    <property type="entry name" value="SEDOHEPTULOSE 7-PHOSPHATE ISOMERASE / DNAA INITIATOR-ASSOCIATING FACTOR FOR REPLICATION INITIATION"/>
    <property type="match status" value="1"/>
</dbReference>
<dbReference type="Pfam" id="PF13580">
    <property type="entry name" value="SIS_2"/>
    <property type="match status" value="1"/>
</dbReference>
<dbReference type="SUPFAM" id="SSF53697">
    <property type="entry name" value="SIS domain"/>
    <property type="match status" value="1"/>
</dbReference>
<dbReference type="PROSITE" id="PS51464">
    <property type="entry name" value="SIS"/>
    <property type="match status" value="1"/>
</dbReference>
<sequence>MINNYIDITVRLLENILDNEADYVKEAGAKVAESIENDGVIHLFGCGHSHILTEEVFYRAGGLAAIHPILHEPLMLHEGAAASSVLERKNDYAKTFMAEEDIRPGDIMIVLSTSGRNPVPIDVAEIAREKGAFVIVITSLQYSASQKSRHTSGKRLSDTGDIVIDNGAVKGDAVLKSANFDIAFAPTSTVTGAVILQSIFAEAIETMVNDNFTPPVFISGNVENADAHNQALVDKYNERIPLLGMNL</sequence>
<organism>
    <name type="scientific">Listeria monocytogenes serotype 4b (strain F2365)</name>
    <dbReference type="NCBI Taxonomy" id="265669"/>
    <lineage>
        <taxon>Bacteria</taxon>
        <taxon>Bacillati</taxon>
        <taxon>Bacillota</taxon>
        <taxon>Bacilli</taxon>
        <taxon>Bacillales</taxon>
        <taxon>Listeriaceae</taxon>
        <taxon>Listeria</taxon>
    </lineage>
</organism>
<evidence type="ECO:0000255" key="1">
    <source>
        <dbReference type="HAMAP-Rule" id="MF_01240"/>
    </source>
</evidence>
<feature type="chain" id="PRO_0000068183" description="UPF0309 protein LMOf2365_2617">
    <location>
        <begin position="1"/>
        <end position="247"/>
    </location>
</feature>
<feature type="domain" description="SIS" evidence="1">
    <location>
        <begin position="31"/>
        <end position="214"/>
    </location>
</feature>
<reference key="1">
    <citation type="journal article" date="2004" name="Nucleic Acids Res.">
        <title>Whole genome comparisons of serotype 4b and 1/2a strains of the food-borne pathogen Listeria monocytogenes reveal new insights into the core genome components of this species.</title>
        <authorList>
            <person name="Nelson K.E."/>
            <person name="Fouts D.E."/>
            <person name="Mongodin E.F."/>
            <person name="Ravel J."/>
            <person name="DeBoy R.T."/>
            <person name="Kolonay J.F."/>
            <person name="Rasko D.A."/>
            <person name="Angiuoli S.V."/>
            <person name="Gill S.R."/>
            <person name="Paulsen I.T."/>
            <person name="Peterson J.D."/>
            <person name="White O."/>
            <person name="Nelson W.C."/>
            <person name="Nierman W.C."/>
            <person name="Beanan M.J."/>
            <person name="Brinkac L.M."/>
            <person name="Daugherty S.C."/>
            <person name="Dodson R.J."/>
            <person name="Durkin A.S."/>
            <person name="Madupu R."/>
            <person name="Haft D.H."/>
            <person name="Selengut J."/>
            <person name="Van Aken S.E."/>
            <person name="Khouri H.M."/>
            <person name="Fedorova N."/>
            <person name="Forberger H.A."/>
            <person name="Tran B."/>
            <person name="Kathariou S."/>
            <person name="Wonderling L.D."/>
            <person name="Uhlich G.A."/>
            <person name="Bayles D.O."/>
            <person name="Luchansky J.B."/>
            <person name="Fraser C.M."/>
        </authorList>
    </citation>
    <scope>NUCLEOTIDE SEQUENCE [LARGE SCALE GENOMIC DNA]</scope>
    <source>
        <strain>F2365</strain>
    </source>
</reference>
<gene>
    <name type="ordered locus">LMOf2365_2617</name>
</gene>
<comment type="similarity">
    <text evidence="1">Belongs to the UPF0309 family.</text>
</comment>
<protein>
    <recommendedName>
        <fullName evidence="1">UPF0309 protein LMOf2365_2617</fullName>
    </recommendedName>
</protein>
<proteinExistence type="inferred from homology"/>
<accession>Q71WD4</accession>
<name>Y2617_LISMF</name>